<sequence length="236" mass="26264">MYNADVLAFGAHSDDVEIGMGGTIAKFVKQEKKVMICDLTEAELSSNGTVSLRKEEAAEAARILGADKRIQLTLPDRGLIMSDQAIRSIVTVIRICRPKAVFMPYKKDRHPDHGNAAALVEEAIFSAGIHKYKDEKSLPAHKVSKVYYYMINGFHQPDFVIDISDTIEAKKQSLNAYKSQFIPSKDSVSTPLTNGYIEIVEAREKLYGKEAGVEYAEGFFSKRMLMLDHDVLGGEQ</sequence>
<name>BSHB1_BACSU</name>
<organism>
    <name type="scientific">Bacillus subtilis (strain 168)</name>
    <dbReference type="NCBI Taxonomy" id="224308"/>
    <lineage>
        <taxon>Bacteria</taxon>
        <taxon>Bacillati</taxon>
        <taxon>Bacillota</taxon>
        <taxon>Bacilli</taxon>
        <taxon>Bacillales</taxon>
        <taxon>Bacillaceae</taxon>
        <taxon>Bacillus</taxon>
    </lineage>
</organism>
<evidence type="ECO:0000250" key="1">
    <source>
        <dbReference type="UniProtKB" id="Q81FP2"/>
    </source>
</evidence>
<evidence type="ECO:0000250" key="2">
    <source>
        <dbReference type="UniProtKB" id="Q81ST8"/>
    </source>
</evidence>
<evidence type="ECO:0000269" key="3">
    <source>
    </source>
</evidence>
<evidence type="ECO:0000303" key="4">
    <source>
    </source>
</evidence>
<evidence type="ECO:0000305" key="5"/>
<evidence type="ECO:0007829" key="6">
    <source>
        <dbReference type="PDB" id="6ULL"/>
    </source>
</evidence>
<reference key="1">
    <citation type="journal article" date="1996" name="Microbiology">
        <title>Sequence analysis of the Bacillus subtilis chromosome region between the serA and kdg loci cloned in a yeast artificial chromosome.</title>
        <authorList>
            <person name="Sorokin A.V."/>
            <person name="Azevedo V."/>
            <person name="Zumstein E."/>
            <person name="Galleron N."/>
            <person name="Ehrlich S.D."/>
            <person name="Serror P."/>
        </authorList>
    </citation>
    <scope>NUCLEOTIDE SEQUENCE [GENOMIC DNA]</scope>
    <source>
        <strain>168 / Marburg / ATCC 6051 / DSM 10 / JCM 1465 / NBRC 13719 / NCIMB 3610 / NRRL NRS-744 / VKM B-501</strain>
    </source>
</reference>
<reference key="2">
    <citation type="journal article" date="1997" name="Nature">
        <title>The complete genome sequence of the Gram-positive bacterium Bacillus subtilis.</title>
        <authorList>
            <person name="Kunst F."/>
            <person name="Ogasawara N."/>
            <person name="Moszer I."/>
            <person name="Albertini A.M."/>
            <person name="Alloni G."/>
            <person name="Azevedo V."/>
            <person name="Bertero M.G."/>
            <person name="Bessieres P."/>
            <person name="Bolotin A."/>
            <person name="Borchert S."/>
            <person name="Borriss R."/>
            <person name="Boursier L."/>
            <person name="Brans A."/>
            <person name="Braun M."/>
            <person name="Brignell S.C."/>
            <person name="Bron S."/>
            <person name="Brouillet S."/>
            <person name="Bruschi C.V."/>
            <person name="Caldwell B."/>
            <person name="Capuano V."/>
            <person name="Carter N.M."/>
            <person name="Choi S.-K."/>
            <person name="Codani J.-J."/>
            <person name="Connerton I.F."/>
            <person name="Cummings N.J."/>
            <person name="Daniel R.A."/>
            <person name="Denizot F."/>
            <person name="Devine K.M."/>
            <person name="Duesterhoeft A."/>
            <person name="Ehrlich S.D."/>
            <person name="Emmerson P.T."/>
            <person name="Entian K.-D."/>
            <person name="Errington J."/>
            <person name="Fabret C."/>
            <person name="Ferrari E."/>
            <person name="Foulger D."/>
            <person name="Fritz C."/>
            <person name="Fujita M."/>
            <person name="Fujita Y."/>
            <person name="Fuma S."/>
            <person name="Galizzi A."/>
            <person name="Galleron N."/>
            <person name="Ghim S.-Y."/>
            <person name="Glaser P."/>
            <person name="Goffeau A."/>
            <person name="Golightly E.J."/>
            <person name="Grandi G."/>
            <person name="Guiseppi G."/>
            <person name="Guy B.J."/>
            <person name="Haga K."/>
            <person name="Haiech J."/>
            <person name="Harwood C.R."/>
            <person name="Henaut A."/>
            <person name="Hilbert H."/>
            <person name="Holsappel S."/>
            <person name="Hosono S."/>
            <person name="Hullo M.-F."/>
            <person name="Itaya M."/>
            <person name="Jones L.-M."/>
            <person name="Joris B."/>
            <person name="Karamata D."/>
            <person name="Kasahara Y."/>
            <person name="Klaerr-Blanchard M."/>
            <person name="Klein C."/>
            <person name="Kobayashi Y."/>
            <person name="Koetter P."/>
            <person name="Koningstein G."/>
            <person name="Krogh S."/>
            <person name="Kumano M."/>
            <person name="Kurita K."/>
            <person name="Lapidus A."/>
            <person name="Lardinois S."/>
            <person name="Lauber J."/>
            <person name="Lazarevic V."/>
            <person name="Lee S.-M."/>
            <person name="Levine A."/>
            <person name="Liu H."/>
            <person name="Masuda S."/>
            <person name="Mauel C."/>
            <person name="Medigue C."/>
            <person name="Medina N."/>
            <person name="Mellado R.P."/>
            <person name="Mizuno M."/>
            <person name="Moestl D."/>
            <person name="Nakai S."/>
            <person name="Noback M."/>
            <person name="Noone D."/>
            <person name="O'Reilly M."/>
            <person name="Ogawa K."/>
            <person name="Ogiwara A."/>
            <person name="Oudega B."/>
            <person name="Park S.-H."/>
            <person name="Parro V."/>
            <person name="Pohl T.M."/>
            <person name="Portetelle D."/>
            <person name="Porwollik S."/>
            <person name="Prescott A.M."/>
            <person name="Presecan E."/>
            <person name="Pujic P."/>
            <person name="Purnelle B."/>
            <person name="Rapoport G."/>
            <person name="Rey M."/>
            <person name="Reynolds S."/>
            <person name="Rieger M."/>
            <person name="Rivolta C."/>
            <person name="Rocha E."/>
            <person name="Roche B."/>
            <person name="Rose M."/>
            <person name="Sadaie Y."/>
            <person name="Sato T."/>
            <person name="Scanlan E."/>
            <person name="Schleich S."/>
            <person name="Schroeter R."/>
            <person name="Scoffone F."/>
            <person name="Sekiguchi J."/>
            <person name="Sekowska A."/>
            <person name="Seror S.J."/>
            <person name="Serror P."/>
            <person name="Shin B.-S."/>
            <person name="Soldo B."/>
            <person name="Sorokin A."/>
            <person name="Tacconi E."/>
            <person name="Takagi T."/>
            <person name="Takahashi H."/>
            <person name="Takemaru K."/>
            <person name="Takeuchi M."/>
            <person name="Tamakoshi A."/>
            <person name="Tanaka T."/>
            <person name="Terpstra P."/>
            <person name="Tognoni A."/>
            <person name="Tosato V."/>
            <person name="Uchiyama S."/>
            <person name="Vandenbol M."/>
            <person name="Vannier F."/>
            <person name="Vassarotti A."/>
            <person name="Viari A."/>
            <person name="Wambutt R."/>
            <person name="Wedler E."/>
            <person name="Wedler H."/>
            <person name="Weitzenegger T."/>
            <person name="Winters P."/>
            <person name="Wipat A."/>
            <person name="Yamamoto H."/>
            <person name="Yamane K."/>
            <person name="Yasumoto K."/>
            <person name="Yata K."/>
            <person name="Yoshida K."/>
            <person name="Yoshikawa H.-F."/>
            <person name="Zumstein E."/>
            <person name="Yoshikawa H."/>
            <person name="Danchin A."/>
        </authorList>
    </citation>
    <scope>NUCLEOTIDE SEQUENCE [LARGE SCALE GENOMIC DNA]</scope>
    <source>
        <strain>168</strain>
    </source>
</reference>
<reference key="3">
    <citation type="journal article" date="2009" name="Microbiology">
        <title>From a consortium sequence to a unified sequence: the Bacillus subtilis 168 reference genome a decade later.</title>
        <authorList>
            <person name="Barbe V."/>
            <person name="Cruveiller S."/>
            <person name="Kunst F."/>
            <person name="Lenoble P."/>
            <person name="Meurice G."/>
            <person name="Sekowska A."/>
            <person name="Vallenet D."/>
            <person name="Wang T."/>
            <person name="Moszer I."/>
            <person name="Medigue C."/>
            <person name="Danchin A."/>
        </authorList>
    </citation>
    <scope>SEQUENCE REVISION TO C-TERMINUS</scope>
</reference>
<reference key="4">
    <citation type="journal article" date="2010" name="Proc. Natl. Acad. Sci. U.S.A.">
        <title>Biosynthesis and functions of bacillithiol, a major low-molecular-weight thiol in Bacilli.</title>
        <authorList>
            <person name="Gaballa A."/>
            <person name="Newton G.L."/>
            <person name="Antelmann H."/>
            <person name="Parsonage D."/>
            <person name="Upton H."/>
            <person name="Rawat M."/>
            <person name="Claiborne A."/>
            <person name="Fahey R.C."/>
            <person name="Helmann J.D."/>
        </authorList>
    </citation>
    <scope>DISRUPTION PHENOTYPE</scope>
    <source>
        <strain>168</strain>
    </source>
</reference>
<protein>
    <recommendedName>
        <fullName evidence="5">N-acetyl-alpha-D-glucosaminyl L-malate deacetylase 1</fullName>
        <shortName evidence="5">GlcNAc-Mal deacetylase 1</shortName>
        <ecNumber evidence="2">3.5.1.-</ecNumber>
    </recommendedName>
</protein>
<feature type="chain" id="PRO_0000049705" description="N-acetyl-alpha-D-glucosaminyl L-malate deacetylase 1">
    <location>
        <begin position="1"/>
        <end position="236"/>
    </location>
</feature>
<feature type="binding site" evidence="1">
    <location>
        <position position="12"/>
    </location>
    <ligand>
        <name>Zn(2+)</name>
        <dbReference type="ChEBI" id="CHEBI:29105"/>
    </ligand>
</feature>
<feature type="binding site" evidence="1">
    <location>
        <position position="15"/>
    </location>
    <ligand>
        <name>Zn(2+)</name>
        <dbReference type="ChEBI" id="CHEBI:29105"/>
    </ligand>
</feature>
<feature type="binding site" evidence="1">
    <location>
        <position position="113"/>
    </location>
    <ligand>
        <name>Zn(2+)</name>
        <dbReference type="ChEBI" id="CHEBI:29105"/>
    </ligand>
</feature>
<feature type="sequence conflict" description="In Ref. 1; AAB38444/AAA92876." evidence="5" ref="1">
    <original>GFFSKRMLMLDHDVLGGEQ</original>
    <variation>VSFPNGC</variation>
    <location>
        <begin position="218"/>
        <end position="236"/>
    </location>
</feature>
<feature type="strand" evidence="6">
    <location>
        <begin position="5"/>
        <end position="12"/>
    </location>
</feature>
<feature type="helix" evidence="6">
    <location>
        <begin position="15"/>
        <end position="29"/>
    </location>
</feature>
<feature type="strand" evidence="6">
    <location>
        <begin position="34"/>
        <end position="40"/>
    </location>
</feature>
<feature type="strand" evidence="6">
    <location>
        <begin position="46"/>
        <end position="48"/>
    </location>
</feature>
<feature type="helix" evidence="6">
    <location>
        <begin position="50"/>
        <end position="64"/>
    </location>
</feature>
<feature type="strand" evidence="6">
    <location>
        <begin position="67"/>
        <end position="71"/>
    </location>
</feature>
<feature type="helix" evidence="6">
    <location>
        <begin position="83"/>
        <end position="96"/>
    </location>
</feature>
<feature type="strand" evidence="6">
    <location>
        <begin position="99"/>
        <end position="104"/>
    </location>
</feature>
<feature type="strand" evidence="6">
    <location>
        <begin position="108"/>
        <end position="110"/>
    </location>
</feature>
<feature type="helix" evidence="6">
    <location>
        <begin position="111"/>
        <end position="127"/>
    </location>
</feature>
<feature type="strand" evidence="6">
    <location>
        <begin position="145"/>
        <end position="149"/>
    </location>
</feature>
<feature type="strand" evidence="6">
    <location>
        <begin position="158"/>
        <end position="162"/>
    </location>
</feature>
<feature type="helix" evidence="6">
    <location>
        <begin position="164"/>
        <end position="166"/>
    </location>
</feature>
<feature type="helix" evidence="6">
    <location>
        <begin position="167"/>
        <end position="175"/>
    </location>
</feature>
<feature type="helix" evidence="6">
    <location>
        <begin position="178"/>
        <end position="181"/>
    </location>
</feature>
<feature type="turn" evidence="6">
    <location>
        <begin position="191"/>
        <end position="195"/>
    </location>
</feature>
<feature type="helix" evidence="6">
    <location>
        <begin position="196"/>
        <end position="210"/>
    </location>
</feature>
<feature type="strand" evidence="6">
    <location>
        <begin position="216"/>
        <end position="220"/>
    </location>
</feature>
<feature type="turn" evidence="6">
    <location>
        <begin position="229"/>
        <end position="232"/>
    </location>
</feature>
<accession>P42981</accession>
<dbReference type="EC" id="3.5.1.-" evidence="2"/>
<dbReference type="EMBL" id="L38424">
    <property type="protein sequence ID" value="AAA92876.1"/>
    <property type="molecule type" value="Genomic_DNA"/>
</dbReference>
<dbReference type="EMBL" id="L47709">
    <property type="protein sequence ID" value="AAB38444.1"/>
    <property type="molecule type" value="Genomic_DNA"/>
</dbReference>
<dbReference type="EMBL" id="AL009126">
    <property type="protein sequence ID" value="CAB14163.2"/>
    <property type="molecule type" value="Genomic_DNA"/>
</dbReference>
<dbReference type="PIR" id="F69937">
    <property type="entry name" value="F69937"/>
</dbReference>
<dbReference type="RefSeq" id="WP_003230642.1">
    <property type="nucleotide sequence ID" value="NZ_OZ025638.1"/>
</dbReference>
<dbReference type="PDB" id="6P2T">
    <property type="method" value="X-ray"/>
    <property type="resolution" value="1.85 A"/>
    <property type="chains" value="A=1-236"/>
</dbReference>
<dbReference type="PDB" id="6ULL">
    <property type="method" value="X-ray"/>
    <property type="resolution" value="1.45 A"/>
    <property type="chains" value="A=1-236"/>
</dbReference>
<dbReference type="PDBsum" id="6P2T"/>
<dbReference type="PDBsum" id="6ULL"/>
<dbReference type="SMR" id="P42981"/>
<dbReference type="FunCoup" id="P42981">
    <property type="interactions" value="83"/>
</dbReference>
<dbReference type="STRING" id="224308.BSU22470"/>
<dbReference type="PaxDb" id="224308-BSU22470"/>
<dbReference type="EnsemblBacteria" id="CAB14163">
    <property type="protein sequence ID" value="CAB14163"/>
    <property type="gene ID" value="BSU_22470"/>
</dbReference>
<dbReference type="GeneID" id="939026"/>
<dbReference type="KEGG" id="bsu:BSU22470"/>
<dbReference type="PATRIC" id="fig|224308.179.peg.2451"/>
<dbReference type="eggNOG" id="COG2120">
    <property type="taxonomic scope" value="Bacteria"/>
</dbReference>
<dbReference type="InParanoid" id="P42981"/>
<dbReference type="OrthoDB" id="9778719at2"/>
<dbReference type="PhylomeDB" id="P42981"/>
<dbReference type="BioCyc" id="BSUB:BSU22470-MONOMER"/>
<dbReference type="BioCyc" id="MetaCyc:BSU22470-MONOMER"/>
<dbReference type="Proteomes" id="UP000001570">
    <property type="component" value="Chromosome"/>
</dbReference>
<dbReference type="GO" id="GO:0019213">
    <property type="term" value="F:deacetylase activity"/>
    <property type="evidence" value="ECO:0007669"/>
    <property type="project" value="InterPro"/>
</dbReference>
<dbReference type="GO" id="GO:0016811">
    <property type="term" value="F:hydrolase activity, acting on carbon-nitrogen (but not peptide) bonds, in linear amides"/>
    <property type="evidence" value="ECO:0000318"/>
    <property type="project" value="GO_Central"/>
</dbReference>
<dbReference type="GO" id="GO:0046872">
    <property type="term" value="F:metal ion binding"/>
    <property type="evidence" value="ECO:0007669"/>
    <property type="project" value="UniProtKB-KW"/>
</dbReference>
<dbReference type="GO" id="GO:0071793">
    <property type="term" value="P:bacillithiol biosynthetic process"/>
    <property type="evidence" value="ECO:0007669"/>
    <property type="project" value="InterPro"/>
</dbReference>
<dbReference type="Gene3D" id="3.40.50.10320">
    <property type="entry name" value="LmbE-like"/>
    <property type="match status" value="1"/>
</dbReference>
<dbReference type="InterPro" id="IPR023842">
    <property type="entry name" value="Bacillithiol_biosynth_BshB1"/>
</dbReference>
<dbReference type="InterPro" id="IPR003737">
    <property type="entry name" value="GlcNAc_PI_deacetylase-related"/>
</dbReference>
<dbReference type="InterPro" id="IPR024078">
    <property type="entry name" value="LmbE-like_dom_sf"/>
</dbReference>
<dbReference type="NCBIfam" id="TIGR04001">
    <property type="entry name" value="thiol_BshB1"/>
    <property type="match status" value="1"/>
</dbReference>
<dbReference type="PANTHER" id="PTHR12993:SF30">
    <property type="entry name" value="N-ACETYL-ALPHA-D-GLUCOSAMINYL L-MALATE DEACETYLASE 1"/>
    <property type="match status" value="1"/>
</dbReference>
<dbReference type="PANTHER" id="PTHR12993">
    <property type="entry name" value="N-ACETYLGLUCOSAMINYL-PHOSPHATIDYLINOSITOL DE-N-ACETYLASE-RELATED"/>
    <property type="match status" value="1"/>
</dbReference>
<dbReference type="Pfam" id="PF02585">
    <property type="entry name" value="PIG-L"/>
    <property type="match status" value="1"/>
</dbReference>
<dbReference type="SUPFAM" id="SSF102588">
    <property type="entry name" value="LmbE-like"/>
    <property type="match status" value="1"/>
</dbReference>
<comment type="function">
    <text evidence="2">Involved in bacillithiol (BSH) biosynthesis. Catalyzes the second step of the pathway, the deacetylation of N-acetylglucosaminylmalate (GlcNAc-Mal) to glucosamine malate (GlcN-Mal).</text>
</comment>
<comment type="catalytic activity">
    <reaction evidence="2">
        <text>(S)-malyl N-acetyl-alpha-D-glucosaminide + H2O = (S)-malyl alpha-D-glucosaminide + acetate</text>
        <dbReference type="Rhea" id="RHEA:33411"/>
        <dbReference type="ChEBI" id="CHEBI:15377"/>
        <dbReference type="ChEBI" id="CHEBI:30089"/>
        <dbReference type="ChEBI" id="CHEBI:64870"/>
        <dbReference type="ChEBI" id="CHEBI:64871"/>
    </reaction>
</comment>
<comment type="cofactor">
    <cofactor evidence="1">
        <name>Zn(2+)</name>
        <dbReference type="ChEBI" id="CHEBI:29105"/>
    </cofactor>
</comment>
<comment type="disruption phenotype">
    <text evidence="3">Mutant shows a 2-fold reduction in bacillithiol levels. BshB1/bshB2 double mutant does not produce bacillithiol.</text>
</comment>
<comment type="similarity">
    <text evidence="5">Belongs to the PIGL family.</text>
</comment>
<keyword id="KW-0002">3D-structure</keyword>
<keyword id="KW-0378">Hydrolase</keyword>
<keyword id="KW-0479">Metal-binding</keyword>
<keyword id="KW-1185">Reference proteome</keyword>
<keyword id="KW-0862">Zinc</keyword>
<proteinExistence type="evidence at protein level"/>
<gene>
    <name evidence="4" type="primary">bshB1</name>
    <name type="synonym">jojG</name>
    <name type="synonym">ypjG</name>
    <name type="ordered locus">BSU22470</name>
</gene>